<sequence>MTLSIPPSIQCQTEAACRLITRVTGDTLRAIHLYGSAVAGGLKPNSDIDLLVTICQPLTEAQRATLMQELLALSSPPGASAEKRALEVTVVLYSQLVPWCFPPSREMQFGEWLREDICQGIYEPAQQDWDMVLLITQILETSIPLKGERAERLFTPAPAAQLLKALRYPLDLWQSTADVQGDEYHIVLTLARIWYTLSTGRFTSKDAAADWLLPQLPEDYAATLRAAQREYLGLEQQDWHILLPAVVRFVDFAKAHIPTQFT</sequence>
<accession>Q8ZPX9</accession>
<reference key="1">
    <citation type="journal article" date="2001" name="Nature">
        <title>Complete genome sequence of Salmonella enterica serovar Typhimurium LT2.</title>
        <authorList>
            <person name="McClelland M."/>
            <person name="Sanderson K.E."/>
            <person name="Spieth J."/>
            <person name="Clifton S.W."/>
            <person name="Latreille P."/>
            <person name="Courtney L."/>
            <person name="Porwollik S."/>
            <person name="Ali J."/>
            <person name="Dante M."/>
            <person name="Du F."/>
            <person name="Hou S."/>
            <person name="Layman D."/>
            <person name="Leonard S."/>
            <person name="Nguyen C."/>
            <person name="Scott K."/>
            <person name="Holmes A."/>
            <person name="Grewal N."/>
            <person name="Mulvaney E."/>
            <person name="Ryan E."/>
            <person name="Sun H."/>
            <person name="Florea L."/>
            <person name="Miller W."/>
            <person name="Stoneking T."/>
            <person name="Nhan M."/>
            <person name="Waterston R."/>
            <person name="Wilson R.K."/>
        </authorList>
    </citation>
    <scope>NUCLEOTIDE SEQUENCE [LARGE SCALE GENOMIC DNA]</scope>
    <source>
        <strain>LT2 / SGSC1412 / ATCC 700720</strain>
    </source>
</reference>
<reference key="2">
    <citation type="journal article" date="2011" name="Mol. Microbiol.">
        <title>Activation of cryptic aminoglycoside resistance in Salmonella enterica.</title>
        <authorList>
            <person name="Koskiniemi S."/>
            <person name="Praenting M."/>
            <person name="Gullberg E."/>
            <person name="Naesvall J."/>
            <person name="Andersson D.I."/>
        </authorList>
    </citation>
    <scope>FUNCTION IN SPECTINOMYCIN AND STREPTOMYCIN RESISTANCE</scope>
    <scope>INDUCTION IN MINIMAL MEDIA</scope>
    <source>
        <strain>LT2 / SGSC1412 / ATCC 700720</strain>
    </source>
</reference>
<reference evidence="7" key="3">
    <citation type="journal article" date="2015" name="Acta Crystallogr. D">
        <title>Structure of AadA from Salmonella enterica: a monomeric aminoglycoside (3'')(9) adenyltransferase.</title>
        <authorList>
            <person name="Chen Y."/>
            <person name="Nasvall J."/>
            <person name="Wu S."/>
            <person name="Andersson D.I."/>
            <person name="Selmer M."/>
        </authorList>
    </citation>
    <scope>X-RAY CRYSTALLOGRAPHY (2.50 ANGSTROMS)</scope>
    <scope>FUNCTION IN SPECTINOMYCIN AND STREPTOMYCIN RESISTANCE</scope>
    <scope>ACTIVE SITE</scope>
    <scope>SUBUNIT</scope>
    <scope>DOMAIN</scope>
    <scope>DISRUPTION PHENOTYPE</scope>
    <scope>MUTAGENESIS OF GLU-87; TRP-112; ASP-182; ARG-192 AND LYS-205</scope>
    <scope>ATP-BINDING</scope>
    <source>
        <strain>LT2 / SGSC1412 / ATCC 700720</strain>
    </source>
</reference>
<reference evidence="8 9 10 11" key="4">
    <citation type="journal article" date="2018" name="J. Biol. Chem.">
        <title>Structural mechanism of AadA, a dual-specificity aminoglycoside adenylyltransferase from Salmonella enterica.</title>
        <authorList>
            <person name="Stern A.L."/>
            <person name="Van der Verren S.E."/>
            <person name="Kanchugal P S."/>
            <person name="Nasvall J."/>
            <person name="Gutierrez de Teran H."/>
            <person name="Selmer M."/>
        </authorList>
    </citation>
    <scope>X-RAY CRYSTALLOGRAPHY (1.40 ANGSTROMS) IN COMPLEX WITH MG-ATP WITH AND WITHOUT ANTIBIOTICS</scope>
    <scope>FUNCTION IN SPECTINOMYCIN AND STREPTOMYCIN RESISTANCE</scope>
    <scope>CATALYTIC ACTIVITY</scope>
    <scope>ACTIVE SITE</scope>
    <scope>DOMAIN</scope>
    <scope>MUTAGENESIS OF GLU-87; TRP-173 AND ASP-178</scope>
    <scope>ATP-BINDING</scope>
    <source>
        <strain>LT2 / SGSC1412 / ATCC 700720</strain>
    </source>
</reference>
<name>S3AD_SALTY</name>
<proteinExistence type="evidence at protein level"/>
<comment type="function">
    <text evidence="2 3">Mediates bacterial resistance to the antibiotics streptomycin and spectinomycin, does not confer resistance to kanamycin (PubMed:26527143). Binds ATP first, then antibiotic (PubMed:26527143, PubMed:29871922).</text>
</comment>
<comment type="catalytic activity">
    <reaction evidence="6">
        <text>streptomycin + ATP = 3''-O-adenylylstreptomycin + diphosphate</text>
        <dbReference type="Rhea" id="RHEA:20245"/>
        <dbReference type="ChEBI" id="CHEBI:30616"/>
        <dbReference type="ChEBI" id="CHEBI:33019"/>
        <dbReference type="ChEBI" id="CHEBI:58007"/>
        <dbReference type="ChEBI" id="CHEBI:58605"/>
        <dbReference type="EC" id="2.7.7.47"/>
    </reaction>
</comment>
<comment type="catalytic activity">
    <reaction evidence="6">
        <text>spectinomycin + ATP = 9-O-adenylylspectinomycin + diphosphate</text>
        <dbReference type="Rhea" id="RHEA:63228"/>
        <dbReference type="ChEBI" id="CHEBI:30616"/>
        <dbReference type="ChEBI" id="CHEBI:33019"/>
        <dbReference type="ChEBI" id="CHEBI:146260"/>
        <dbReference type="ChEBI" id="CHEBI:146261"/>
    </reaction>
</comment>
<comment type="subunit">
    <text evidence="2">Monomer.</text>
</comment>
<comment type="induction">
    <text evidence="1">Induced by growth in minimal media (at protein level). Under positive control of the stringent response regulator guanosine 3',5'-bis(diphosphate) (ppGpp).</text>
</comment>
<comment type="domain">
    <text evidence="2 3">Has an N-terminal adenylyltranferase and a C-terminal helical domain, with an ATP-binding cleft between them (PubMed:26527143, PubMed:29871922). Upon ATP binding the two domains reposition, antibiotics bind in this cleft (PubMed:29871922).</text>
</comment>
<comment type="disruption phenotype">
    <text evidence="2">Loss of streptomycin and spectinomycin resistance.</text>
</comment>
<keyword id="KW-0002">3D-structure</keyword>
<keyword id="KW-0046">Antibiotic resistance</keyword>
<keyword id="KW-0067">ATP-binding</keyword>
<keyword id="KW-0460">Magnesium</keyword>
<keyword id="KW-0479">Metal-binding</keyword>
<keyword id="KW-0547">Nucleotide-binding</keyword>
<keyword id="KW-0548">Nucleotidyltransferase</keyword>
<keyword id="KW-1185">Reference proteome</keyword>
<keyword id="KW-0808">Transferase</keyword>
<protein>
    <recommendedName>
        <fullName evidence="4">Aminoglycoside (3'') (9) adenylyltransferase</fullName>
        <ecNumber evidence="6">2.7.7.47</ecNumber>
    </recommendedName>
    <alternativeName>
        <fullName evidence="4">AadA</fullName>
    </alternativeName>
    <alternativeName>
        <fullName evidence="4">Aminoglycoside nucleotidyltransferase (3'') (9) adenyltransferase</fullName>
        <shortName evidence="4">ANT(3'') (9) adenyltransferase</shortName>
    </alternativeName>
</protein>
<feature type="chain" id="PRO_0000450270" description="Aminoglycoside (3'') (9) adenylyltransferase">
    <location>
        <begin position="1"/>
        <end position="262"/>
    </location>
</feature>
<feature type="region of interest" description="Adenylyltransferase domain" evidence="2">
    <location>
        <begin position="1"/>
        <end position="157"/>
    </location>
</feature>
<feature type="region of interest" description="Helical domain" evidence="2">
    <location>
        <begin position="158"/>
        <end position="262"/>
    </location>
</feature>
<feature type="active site" description="Proton acceptor" evidence="5 6">
    <location>
        <position position="87"/>
    </location>
</feature>
<feature type="binding site" evidence="3 8 9 10 11">
    <location>
        <position position="36"/>
    </location>
    <ligand>
        <name>ATP</name>
        <dbReference type="ChEBI" id="CHEBI:30616"/>
    </ligand>
</feature>
<feature type="binding site" evidence="3 8 9 10 11">
    <location>
        <position position="46"/>
    </location>
    <ligand>
        <name>ATP</name>
        <dbReference type="ChEBI" id="CHEBI:30616"/>
    </ligand>
</feature>
<feature type="binding site" evidence="3 10 11">
    <location>
        <position position="47"/>
    </location>
    <ligand>
        <name>ATP</name>
        <dbReference type="ChEBI" id="CHEBI:30616"/>
    </ligand>
</feature>
<feature type="binding site" evidence="3 8 9 10 11">
    <location>
        <position position="47"/>
    </location>
    <ligand>
        <name>Mg(2+)</name>
        <dbReference type="ChEBI" id="CHEBI:18420"/>
        <label>1</label>
    </ligand>
</feature>
<feature type="binding site" evidence="3 8 9 10 11">
    <location>
        <position position="47"/>
    </location>
    <ligand>
        <name>Mg(2+)</name>
        <dbReference type="ChEBI" id="CHEBI:18420"/>
        <label>2</label>
    </ligand>
</feature>
<feature type="binding site" evidence="3 8 9 10 11">
    <location>
        <position position="49"/>
    </location>
    <ligand>
        <name>Mg(2+)</name>
        <dbReference type="ChEBI" id="CHEBI:18420"/>
        <label>1</label>
    </ligand>
</feature>
<feature type="binding site" evidence="3 8 9 10 11">
    <location>
        <position position="49"/>
    </location>
    <ligand>
        <name>Mg(2+)</name>
        <dbReference type="ChEBI" id="CHEBI:18420"/>
        <label>2</label>
    </ligand>
</feature>
<feature type="binding site" evidence="3 8 9 10 11">
    <location>
        <position position="87"/>
    </location>
    <ligand>
        <name>Mg(2+)</name>
        <dbReference type="ChEBI" id="CHEBI:18420"/>
        <label>2</label>
    </ligand>
</feature>
<feature type="binding site" evidence="3 8 9 10 11">
    <location>
        <position position="130"/>
    </location>
    <ligand>
        <name>ATP</name>
        <dbReference type="ChEBI" id="CHEBI:30616"/>
    </ligand>
</feature>
<feature type="binding site" evidence="3 9 10 11">
    <location>
        <begin position="173"/>
        <end position="178"/>
    </location>
    <ligand>
        <name>streptomycin</name>
        <dbReference type="ChEBI" id="CHEBI:58007"/>
        <note>substrate</note>
    </ligand>
</feature>
<feature type="binding site" evidence="3 9 10">
    <location>
        <position position="185"/>
    </location>
    <ligand>
        <name>streptomycin</name>
        <dbReference type="ChEBI" id="CHEBI:58007"/>
        <note>substrate</note>
    </ligand>
</feature>
<feature type="binding site" evidence="3 8 9 10 11">
    <location>
        <position position="205"/>
    </location>
    <ligand>
        <name>ATP</name>
        <dbReference type="ChEBI" id="CHEBI:30616"/>
    </ligand>
</feature>
<feature type="binding site" evidence="3 8 9 10 11">
    <location>
        <position position="231"/>
    </location>
    <ligand>
        <name>ATP</name>
        <dbReference type="ChEBI" id="CHEBI:30616"/>
    </ligand>
</feature>
<feature type="mutagenesis site" description="Loss of streptomycin and spectinomycin resistance, 4-fold decreased ATP-binding, significantly decreased streptomycin binding, no spectinomycin binding." evidence="2 3">
    <original>E</original>
    <variation>A</variation>
    <variation>Q</variation>
    <location>
        <position position="87"/>
    </location>
</feature>
<feature type="mutagenesis site" description="8-fold reduced MIC for streptomycin, loss of spectinomycin resistance." evidence="2">
    <original>W</original>
    <variation>A</variation>
    <location>
        <position position="112"/>
    </location>
</feature>
<feature type="mutagenesis site" description="2.7-fold reduced MIC for streptomycin, loss of spectinomycin resistance, no change in ATP or antibiotic binding." evidence="2">
    <original>W</original>
    <variation>F</variation>
    <location>
        <position position="112"/>
    </location>
</feature>
<feature type="mutagenesis site" description="10-fold reduced MIC for streptomycin, no change in spectinomycin resistance, reduced streptomycin but not spectinomycin binding." evidence="3">
    <original>W</original>
    <variation>A</variation>
    <location>
        <position position="173"/>
    </location>
</feature>
<feature type="mutagenesis site" description="5-fold reduced MIC for streptomycin, 1.5-fold reduced MIC for spectinomycin resistance, reduced streptomycin but not spectinomycin binding." evidence="3">
    <original>D</original>
    <variation>A</variation>
    <location>
        <position position="178"/>
    </location>
</feature>
<feature type="mutagenesis site" description="4-5-fold reduced MIC for streptomycin and spectinomycin, very little spectinomycin binding." evidence="2">
    <original>D</original>
    <variation>A</variation>
    <variation>N</variation>
    <location>
        <position position="182"/>
    </location>
</feature>
<feature type="mutagenesis site" description="Loss of streptomycin and spectinomycin resistance, no ATP-binding, very little antibiotic binding." evidence="2">
    <original>R</original>
    <variation>A</variation>
    <location>
        <position position="192"/>
    </location>
</feature>
<feature type="mutagenesis site" description="Loss of streptomycin and spectinomycin resistance, no ATP-binding, near wild-type streptomycin binding, significantly decreased spectinomycin binding." evidence="2">
    <original>K</original>
    <variation>A</variation>
    <location>
        <position position="205"/>
    </location>
</feature>
<feature type="helix" evidence="13">
    <location>
        <begin position="7"/>
        <end position="9"/>
    </location>
</feature>
<feature type="helix" evidence="13">
    <location>
        <begin position="10"/>
        <end position="24"/>
    </location>
</feature>
<feature type="helix" evidence="13">
    <location>
        <begin position="25"/>
        <end position="27"/>
    </location>
</feature>
<feature type="strand" evidence="13">
    <location>
        <begin position="28"/>
        <end position="34"/>
    </location>
</feature>
<feature type="helix" evidence="13">
    <location>
        <begin position="36"/>
        <end position="39"/>
    </location>
</feature>
<feature type="strand" evidence="13">
    <location>
        <begin position="48"/>
        <end position="56"/>
    </location>
</feature>
<feature type="helix" evidence="13">
    <location>
        <begin position="60"/>
        <end position="73"/>
    </location>
</feature>
<feature type="strand" evidence="13">
    <location>
        <begin position="81"/>
        <end position="83"/>
    </location>
</feature>
<feature type="strand" evidence="13">
    <location>
        <begin position="86"/>
        <end position="92"/>
    </location>
</feature>
<feature type="helix" evidence="13">
    <location>
        <begin position="93"/>
        <end position="95"/>
    </location>
</feature>
<feature type="turn" evidence="13">
    <location>
        <begin position="96"/>
        <end position="99"/>
    </location>
</feature>
<feature type="strand" evidence="13">
    <location>
        <begin position="104"/>
        <end position="109"/>
    </location>
</feature>
<feature type="helix" evidence="13">
    <location>
        <begin position="111"/>
        <end position="113"/>
    </location>
</feature>
<feature type="helix" evidence="13">
    <location>
        <begin position="114"/>
        <end position="118"/>
    </location>
</feature>
<feature type="strand" evidence="12">
    <location>
        <begin position="125"/>
        <end position="127"/>
    </location>
</feature>
<feature type="helix" evidence="13">
    <location>
        <begin position="130"/>
        <end position="140"/>
    </location>
</feature>
<feature type="strand" evidence="13">
    <location>
        <begin position="143"/>
        <end position="148"/>
    </location>
</feature>
<feature type="helix" evidence="13">
    <location>
        <begin position="150"/>
        <end position="153"/>
    </location>
</feature>
<feature type="helix" evidence="13">
    <location>
        <begin position="159"/>
        <end position="172"/>
    </location>
</feature>
<feature type="helix" evidence="13">
    <location>
        <begin position="176"/>
        <end position="179"/>
    </location>
</feature>
<feature type="helix" evidence="13">
    <location>
        <begin position="183"/>
        <end position="199"/>
    </location>
</feature>
<feature type="helix" evidence="13">
    <location>
        <begin position="205"/>
        <end position="212"/>
    </location>
</feature>
<feature type="helix" evidence="13">
    <location>
        <begin position="213"/>
        <end position="215"/>
    </location>
</feature>
<feature type="helix" evidence="13">
    <location>
        <begin position="218"/>
        <end position="231"/>
    </location>
</feature>
<feature type="helix" evidence="13">
    <location>
        <begin position="239"/>
        <end position="256"/>
    </location>
</feature>
<organism>
    <name type="scientific">Salmonella typhimurium (strain LT2 / SGSC1412 / ATCC 700720)</name>
    <dbReference type="NCBI Taxonomy" id="99287"/>
    <lineage>
        <taxon>Bacteria</taxon>
        <taxon>Pseudomonadati</taxon>
        <taxon>Pseudomonadota</taxon>
        <taxon>Gammaproteobacteria</taxon>
        <taxon>Enterobacterales</taxon>
        <taxon>Enterobacteriaceae</taxon>
        <taxon>Salmonella</taxon>
    </lineage>
</organism>
<dbReference type="EC" id="2.7.7.47" evidence="6"/>
<dbReference type="EMBL" id="AE006468">
    <property type="protein sequence ID" value="AAL20189.1"/>
    <property type="molecule type" value="Genomic_DNA"/>
</dbReference>
<dbReference type="RefSeq" id="NP_460230.1">
    <property type="nucleotide sequence ID" value="NC_003197.2"/>
</dbReference>
<dbReference type="RefSeq" id="WP_000175803.1">
    <property type="nucleotide sequence ID" value="NC_003197.2"/>
</dbReference>
<dbReference type="PDB" id="4CS6">
    <property type="method" value="X-ray"/>
    <property type="resolution" value="2.50 A"/>
    <property type="chains" value="A=1-262"/>
</dbReference>
<dbReference type="PDB" id="5G4A">
    <property type="method" value="X-ray"/>
    <property type="resolution" value="1.90 A"/>
    <property type="chains" value="A/B=1-262"/>
</dbReference>
<dbReference type="PDB" id="5LPA">
    <property type="method" value="X-ray"/>
    <property type="resolution" value="1.40 A"/>
    <property type="chains" value="A/B=1-262"/>
</dbReference>
<dbReference type="PDB" id="5LUH">
    <property type="method" value="X-ray"/>
    <property type="resolution" value="1.73 A"/>
    <property type="chains" value="A/B=1-262"/>
</dbReference>
<dbReference type="PDB" id="6FZB">
    <property type="method" value="X-ray"/>
    <property type="resolution" value="2.05 A"/>
    <property type="chains" value="A/B=1-262"/>
</dbReference>
<dbReference type="PDBsum" id="4CS6"/>
<dbReference type="PDBsum" id="5G4A"/>
<dbReference type="PDBsum" id="5LPA"/>
<dbReference type="PDBsum" id="5LUH"/>
<dbReference type="PDBsum" id="6FZB"/>
<dbReference type="SMR" id="Q8ZPX9"/>
<dbReference type="STRING" id="99287.STM1264"/>
<dbReference type="PaxDb" id="99287-STM1264"/>
<dbReference type="GeneID" id="1252782"/>
<dbReference type="KEGG" id="stm:STM1264"/>
<dbReference type="PATRIC" id="fig|99287.12.peg.1341"/>
<dbReference type="HOGENOM" id="CLU_071584_0_0_6"/>
<dbReference type="OMA" id="QQDWDIV"/>
<dbReference type="PhylomeDB" id="Q8ZPX9"/>
<dbReference type="BioCyc" id="SENT99287:STM1264-MONOMER"/>
<dbReference type="BRENDA" id="2.7.7.47">
    <property type="organism ID" value="5542"/>
</dbReference>
<dbReference type="EvolutionaryTrace" id="Q8ZPX9"/>
<dbReference type="Proteomes" id="UP000001014">
    <property type="component" value="Chromosome"/>
</dbReference>
<dbReference type="GO" id="GO:0070566">
    <property type="term" value="F:adenylyltransferase activity"/>
    <property type="evidence" value="ECO:0007669"/>
    <property type="project" value="InterPro"/>
</dbReference>
<dbReference type="GO" id="GO:0009012">
    <property type="term" value="F:aminoglycoside 3''-adenylyltransferase activity"/>
    <property type="evidence" value="ECO:0000314"/>
    <property type="project" value="UniProtKB"/>
</dbReference>
<dbReference type="GO" id="GO:0005524">
    <property type="term" value="F:ATP binding"/>
    <property type="evidence" value="ECO:0000315"/>
    <property type="project" value="UniProtKB"/>
</dbReference>
<dbReference type="GO" id="GO:0046872">
    <property type="term" value="F:metal ion binding"/>
    <property type="evidence" value="ECO:0007669"/>
    <property type="project" value="UniProtKB-KW"/>
</dbReference>
<dbReference type="GO" id="GO:0046677">
    <property type="term" value="P:response to antibiotic"/>
    <property type="evidence" value="ECO:0000315"/>
    <property type="project" value="UniProtKB"/>
</dbReference>
<dbReference type="CDD" id="cd05403">
    <property type="entry name" value="NT_KNTase_like"/>
    <property type="match status" value="1"/>
</dbReference>
<dbReference type="Gene3D" id="3.30.460.10">
    <property type="entry name" value="Beta Polymerase, domain 2"/>
    <property type="match status" value="1"/>
</dbReference>
<dbReference type="InterPro" id="IPR024172">
    <property type="entry name" value="AadA/Aad9"/>
</dbReference>
<dbReference type="InterPro" id="IPR025184">
    <property type="entry name" value="AadA_C"/>
</dbReference>
<dbReference type="InterPro" id="IPR043519">
    <property type="entry name" value="NT_sf"/>
</dbReference>
<dbReference type="InterPro" id="IPR002934">
    <property type="entry name" value="Polymerase_NTP_transf_dom"/>
</dbReference>
<dbReference type="NCBIfam" id="NF012135">
    <property type="entry name" value="ANT_3pp_9_crypt"/>
    <property type="match status" value="1"/>
</dbReference>
<dbReference type="NCBIfam" id="NF010309">
    <property type="entry name" value="PRK13746.1"/>
    <property type="match status" value="1"/>
</dbReference>
<dbReference type="Pfam" id="PF13427">
    <property type="entry name" value="AadA_C"/>
    <property type="match status" value="1"/>
</dbReference>
<dbReference type="Pfam" id="PF01909">
    <property type="entry name" value="NTP_transf_2"/>
    <property type="match status" value="1"/>
</dbReference>
<dbReference type="PIRSF" id="PIRSF000819">
    <property type="entry name" value="Streptomycin_3-adenylyltransf"/>
    <property type="match status" value="1"/>
</dbReference>
<dbReference type="SUPFAM" id="SSF81301">
    <property type="entry name" value="Nucleotidyltransferase"/>
    <property type="match status" value="1"/>
</dbReference>
<gene>
    <name type="primary">aadA</name>
    <name type="ordered locus">STM1264</name>
</gene>
<evidence type="ECO:0000269" key="1">
    <source>
    </source>
</evidence>
<evidence type="ECO:0000269" key="2">
    <source>
    </source>
</evidence>
<evidence type="ECO:0000269" key="3">
    <source>
    </source>
</evidence>
<evidence type="ECO:0000303" key="4">
    <source>
    </source>
</evidence>
<evidence type="ECO:0000305" key="5">
    <source>
    </source>
</evidence>
<evidence type="ECO:0000305" key="6">
    <source>
    </source>
</evidence>
<evidence type="ECO:0007744" key="7">
    <source>
        <dbReference type="PDB" id="4CS6"/>
    </source>
</evidence>
<evidence type="ECO:0007744" key="8">
    <source>
        <dbReference type="PDB" id="5G4A"/>
    </source>
</evidence>
<evidence type="ECO:0007744" key="9">
    <source>
        <dbReference type="PDB" id="5LPA"/>
    </source>
</evidence>
<evidence type="ECO:0007744" key="10">
    <source>
        <dbReference type="PDB" id="5LUH"/>
    </source>
</evidence>
<evidence type="ECO:0007744" key="11">
    <source>
        <dbReference type="PDB" id="6FZB"/>
    </source>
</evidence>
<evidence type="ECO:0007829" key="12">
    <source>
        <dbReference type="PDB" id="5G4A"/>
    </source>
</evidence>
<evidence type="ECO:0007829" key="13">
    <source>
        <dbReference type="PDB" id="5LPA"/>
    </source>
</evidence>